<accession>P86156</accession>
<protein>
    <recommendedName>
        <fullName evidence="5">Bradykinin RL-16-1</fullName>
    </recommendedName>
    <component>
        <recommendedName>
            <fullName evidence="4">Bradykinin RS-14</fullName>
        </recommendedName>
        <alternativeName>
            <fullName evidence="5">Bradykinin RS-14-2</fullName>
        </alternativeName>
    </component>
    <component>
        <recommendedName>
            <fullName evidence="4">Bradykinin RA-11</fullName>
        </recommendedName>
        <alternativeName>
            <fullName evidence="5">Bradykinin RA-11-2</fullName>
        </alternativeName>
    </component>
    <component>
        <recommendedName>
            <fullName evidence="4">Bradykinin RI-10</fullName>
        </recommendedName>
    </component>
    <component>
        <recommendedName>
            <fullName evidence="4">Bradykinin</fullName>
        </recommendedName>
    </component>
</protein>
<comment type="function">
    <text evidence="1">Induces relaxation of arterial smooth muscle, by targeting bradykinin receptors (BDKRB).</text>
</comment>
<comment type="subcellular location">
    <subcellularLocation>
        <location evidence="2 3">Secreted</location>
    </subcellularLocation>
</comment>
<comment type="tissue specificity">
    <text evidence="7">Expressed by the skin glands.</text>
</comment>
<comment type="mass spectrometry">
    <molecule>Bradykinin RL-16-1</molecule>
</comment>
<comment type="mass spectrometry">
    <molecule>Bradykinin RS-14</molecule>
    <text>Bradykinin RS-14.</text>
</comment>
<comment type="mass spectrometry">
    <molecule>Bradykinin RS-14</molecule>
    <text>Bradykinin RS-14.</text>
</comment>
<comment type="mass spectrometry">
    <molecule>Bradykinin RA-11</molecule>
    <text>Bradykinin RA-11.</text>
</comment>
<comment type="mass spectrometry">
    <molecule>Bradykinin RI-10</molecule>
    <text>Bradykinin RI-10.</text>
</comment>
<comment type="mass spectrometry">
    <molecule>Bradykinin</molecule>
    <text>Bradykinin.</text>
</comment>
<comment type="similarity">
    <text evidence="6">Belongs to the bradykinin-related peptide family.</text>
</comment>
<proteinExistence type="evidence at protein level"/>
<name>BRK1_PELRI</name>
<sequence>RPPGFSPFRIAPASSL</sequence>
<evidence type="ECO:0000250" key="1"/>
<evidence type="ECO:0000269" key="2">
    <source>
    </source>
</evidence>
<evidence type="ECO:0000269" key="3">
    <source>
    </source>
</evidence>
<evidence type="ECO:0000303" key="4">
    <source>
    </source>
</evidence>
<evidence type="ECO:0000303" key="5">
    <source>
    </source>
</evidence>
<evidence type="ECO:0000305" key="6"/>
<evidence type="ECO:0000305" key="7">
    <source>
    </source>
</evidence>
<keyword id="KW-0878">Amphibian defense peptide</keyword>
<keyword id="KW-0903">Direct protein sequencing</keyword>
<keyword id="KW-1213">G-protein coupled receptor impairing toxin</keyword>
<keyword id="KW-0964">Secreted</keyword>
<keyword id="KW-0800">Toxin</keyword>
<keyword id="KW-0838">Vasoactive</keyword>
<keyword id="KW-0840">Vasodilator</keyword>
<feature type="peptide" id="PRO_0000443419" description="Bradykinin RL-16-1" evidence="3">
    <location>
        <begin position="1"/>
        <end position="16"/>
    </location>
</feature>
<feature type="peptide" id="PRO_0000361079" description="Bradykinin RS-14" evidence="2 3">
    <location>
        <begin position="1"/>
        <end position="14"/>
    </location>
</feature>
<feature type="peptide" id="PRO_0000361080" description="Bradykinin RA-11" evidence="2">
    <location>
        <begin position="1"/>
        <end position="11"/>
    </location>
</feature>
<feature type="peptide" id="PRO_0000361081" description="Bradykinin RI-10" evidence="2">
    <location>
        <begin position="1"/>
        <end position="10"/>
    </location>
</feature>
<feature type="peptide" id="PRO_0000361082" description="Bradykinin" evidence="2">
    <location>
        <begin position="1"/>
        <end position="9"/>
    </location>
</feature>
<dbReference type="GO" id="GO:0005576">
    <property type="term" value="C:extracellular region"/>
    <property type="evidence" value="ECO:0007669"/>
    <property type="project" value="UniProtKB-SubCell"/>
</dbReference>
<dbReference type="GO" id="GO:0090729">
    <property type="term" value="F:toxin activity"/>
    <property type="evidence" value="ECO:0007669"/>
    <property type="project" value="UniProtKB-KW"/>
</dbReference>
<dbReference type="GO" id="GO:0006952">
    <property type="term" value="P:defense response"/>
    <property type="evidence" value="ECO:0007669"/>
    <property type="project" value="UniProtKB-KW"/>
</dbReference>
<dbReference type="GO" id="GO:0042311">
    <property type="term" value="P:vasodilation"/>
    <property type="evidence" value="ECO:0007669"/>
    <property type="project" value="UniProtKB-KW"/>
</dbReference>
<organism>
    <name type="scientific">Pelophylax ridibundus</name>
    <name type="common">Marsh frog</name>
    <name type="synonym">Rana ridibunda</name>
    <dbReference type="NCBI Taxonomy" id="8406"/>
    <lineage>
        <taxon>Eukaryota</taxon>
        <taxon>Metazoa</taxon>
        <taxon>Chordata</taxon>
        <taxon>Craniata</taxon>
        <taxon>Vertebrata</taxon>
        <taxon>Euteleostomi</taxon>
        <taxon>Amphibia</taxon>
        <taxon>Batrachia</taxon>
        <taxon>Anura</taxon>
        <taxon>Neobatrachia</taxon>
        <taxon>Ranoidea</taxon>
        <taxon>Ranidae</taxon>
        <taxon>Pelophylax</taxon>
    </lineage>
</organism>
<reference key="1">
    <citation type="journal article" date="2017" name="Anal. Bioanal. Chem.">
        <title>Differentiation of frogs from two populations belonging to the Pelophylax esculentus complex by LC-MS/MS comparison of their skin peptidomes.</title>
        <authorList>
            <person name="Samgina T.Y."/>
            <person name="Artemenko K.A."/>
            <person name="Bergquist J."/>
            <person name="Trebse P."/>
            <person name="Torkar G."/>
            <person name="Tolpina M.D."/>
            <person name="Lebedev A.T."/>
        </authorList>
    </citation>
    <scope>PROTEIN SEQUENCE</scope>
    <scope>SUBCELLULAR LOCATION</scope>
    <scope>MASS SPECTROMETRY</scope>
    <scope>IDENTIFICATION BY MASS SPECTROMETRY</scope>
    <source>
        <tissue evidence="5">Skin secretion</tissue>
    </source>
</reference>
<reference evidence="6" key="2">
    <citation type="journal article" date="2008" name="Rapid Commun. Mass Spectrom.">
        <title>De novo sequencing of peptides secreted by the skin glands of the caucasian green frog Rana ridibunda.</title>
        <authorList>
            <person name="Samgina T.Y."/>
            <person name="Artemenko K.A."/>
            <person name="Gorshkov V.A."/>
            <person name="Ogourtsov S.V."/>
            <person name="Zubarev R.A."/>
            <person name="Lebedev A.T."/>
        </authorList>
    </citation>
    <scope>PROTEIN SEQUENCE OF 1-14</scope>
    <scope>SUBCELLULAR LOCATION</scope>
    <scope>MASS SPECTROMETRY</scope>
    <source>
        <tissue evidence="2">Skin secretion</tissue>
    </source>
</reference>